<comment type="similarity">
    <text evidence="1">To H.pylori HP0245/JHP0230.</text>
</comment>
<name>Y1463_CAMJE</name>
<accession>Q9PMJ7</accession>
<accession>Q0P8F2</accession>
<sequence>MKVDNFLNTYSMNSALLDRAAKARSLESSIKINDNDIVTKSKEDKALKEQTNAFEAFFLKQVLDVSLKSQNSLFGKDASDEIYSSMYNDTMSKALSGGMGFSKLLYDFLKERG</sequence>
<reference key="1">
    <citation type="journal article" date="2000" name="Nature">
        <title>The genome sequence of the food-borne pathogen Campylobacter jejuni reveals hypervariable sequences.</title>
        <authorList>
            <person name="Parkhill J."/>
            <person name="Wren B.W."/>
            <person name="Mungall K.L."/>
            <person name="Ketley J.M."/>
            <person name="Churcher C.M."/>
            <person name="Basham D."/>
            <person name="Chillingworth T."/>
            <person name="Davies R.M."/>
            <person name="Feltwell T."/>
            <person name="Holroyd S."/>
            <person name="Jagels K."/>
            <person name="Karlyshev A.V."/>
            <person name="Moule S."/>
            <person name="Pallen M.J."/>
            <person name="Penn C.W."/>
            <person name="Quail M.A."/>
            <person name="Rajandream M.A."/>
            <person name="Rutherford K.M."/>
            <person name="van Vliet A.H.M."/>
            <person name="Whitehead S."/>
            <person name="Barrell B.G."/>
        </authorList>
    </citation>
    <scope>NUCLEOTIDE SEQUENCE [LARGE SCALE GENOMIC DNA]</scope>
    <source>
        <strain>ATCC 700819 / NCTC 11168</strain>
    </source>
</reference>
<feature type="chain" id="PRO_0000128679" description="Uncharacterized protein Cj1463">
    <location>
        <begin position="1"/>
        <end position="113"/>
    </location>
</feature>
<dbReference type="EMBL" id="AL111168">
    <property type="protein sequence ID" value="CAL35571.1"/>
    <property type="molecule type" value="Genomic_DNA"/>
</dbReference>
<dbReference type="PIR" id="F81292">
    <property type="entry name" value="F81292"/>
</dbReference>
<dbReference type="RefSeq" id="WP_002851191.1">
    <property type="nucleotide sequence ID" value="NZ_SZUC01000003.1"/>
</dbReference>
<dbReference type="SMR" id="Q9PMJ7"/>
<dbReference type="IntAct" id="Q9PMJ7">
    <property type="interactions" value="3"/>
</dbReference>
<dbReference type="STRING" id="192222.Cj1463"/>
<dbReference type="PaxDb" id="192222-Cj1463"/>
<dbReference type="EnsemblBacteria" id="CAL35571">
    <property type="protein sequence ID" value="CAL35571"/>
    <property type="gene ID" value="Cj1463"/>
</dbReference>
<dbReference type="KEGG" id="cje:Cj1463"/>
<dbReference type="PATRIC" id="fig|192222.6.peg.1443"/>
<dbReference type="eggNOG" id="COG3951">
    <property type="taxonomic scope" value="Bacteria"/>
</dbReference>
<dbReference type="HOGENOM" id="CLU_170908_0_0_7"/>
<dbReference type="OrthoDB" id="5324665at2"/>
<dbReference type="Proteomes" id="UP000000799">
    <property type="component" value="Chromosome"/>
</dbReference>
<dbReference type="InterPro" id="IPR016511">
    <property type="entry name" value="UCP007248"/>
</dbReference>
<dbReference type="PIRSF" id="PIRSF007248">
    <property type="entry name" value="UCP007248"/>
    <property type="match status" value="1"/>
</dbReference>
<gene>
    <name type="ordered locus">Cj1463</name>
</gene>
<evidence type="ECO:0000305" key="1"/>
<keyword id="KW-1185">Reference proteome</keyword>
<proteinExistence type="predicted"/>
<protein>
    <recommendedName>
        <fullName>Uncharacterized protein Cj1463</fullName>
    </recommendedName>
</protein>
<organism>
    <name type="scientific">Campylobacter jejuni subsp. jejuni serotype O:2 (strain ATCC 700819 / NCTC 11168)</name>
    <dbReference type="NCBI Taxonomy" id="192222"/>
    <lineage>
        <taxon>Bacteria</taxon>
        <taxon>Pseudomonadati</taxon>
        <taxon>Campylobacterota</taxon>
        <taxon>Epsilonproteobacteria</taxon>
        <taxon>Campylobacterales</taxon>
        <taxon>Campylobacteraceae</taxon>
        <taxon>Campylobacter</taxon>
    </lineage>
</organism>